<name>RRF_SHESW</name>
<gene>
    <name evidence="1" type="primary">frr</name>
    <name type="ordered locus">Sputw3181_2752</name>
</gene>
<organism>
    <name type="scientific">Shewanella sp. (strain W3-18-1)</name>
    <dbReference type="NCBI Taxonomy" id="351745"/>
    <lineage>
        <taxon>Bacteria</taxon>
        <taxon>Pseudomonadati</taxon>
        <taxon>Pseudomonadota</taxon>
        <taxon>Gammaproteobacteria</taxon>
        <taxon>Alteromonadales</taxon>
        <taxon>Shewanellaceae</taxon>
        <taxon>Shewanella</taxon>
    </lineage>
</organism>
<evidence type="ECO:0000255" key="1">
    <source>
        <dbReference type="HAMAP-Rule" id="MF_00040"/>
    </source>
</evidence>
<protein>
    <recommendedName>
        <fullName evidence="1">Ribosome-recycling factor</fullName>
        <shortName evidence="1">RRF</shortName>
    </recommendedName>
    <alternativeName>
        <fullName evidence="1">Ribosome-releasing factor</fullName>
    </alternativeName>
</protein>
<feature type="chain" id="PRO_1000003265" description="Ribosome-recycling factor">
    <location>
        <begin position="1"/>
        <end position="185"/>
    </location>
</feature>
<sequence length="185" mass="20660">MIENIKKDAQERMGKCVDATKNQMAKVRTGRAHPSLLDSIQVSYYGTMTPLNQVANVGVEDSRTLSVTVFDRSAIQAVEKAIMSSDLGLNPMSAGATLRIPLPALTEERRKDFIKVVRAEAEGGRVAIRNVRRDAISEVKKLEKAKECTEDDVRRFEDDVQKFTDAHIKKVDEILAAKEIELMEV</sequence>
<dbReference type="EMBL" id="CP000503">
    <property type="protein sequence ID" value="ABM25569.1"/>
    <property type="molecule type" value="Genomic_DNA"/>
</dbReference>
<dbReference type="RefSeq" id="WP_011790025.1">
    <property type="nucleotide sequence ID" value="NC_008750.1"/>
</dbReference>
<dbReference type="SMR" id="A1RLM4"/>
<dbReference type="GeneID" id="67442871"/>
<dbReference type="KEGG" id="shw:Sputw3181_2752"/>
<dbReference type="HOGENOM" id="CLU_073981_2_1_6"/>
<dbReference type="Proteomes" id="UP000002597">
    <property type="component" value="Chromosome"/>
</dbReference>
<dbReference type="GO" id="GO:0005829">
    <property type="term" value="C:cytosol"/>
    <property type="evidence" value="ECO:0007669"/>
    <property type="project" value="GOC"/>
</dbReference>
<dbReference type="GO" id="GO:0043023">
    <property type="term" value="F:ribosomal large subunit binding"/>
    <property type="evidence" value="ECO:0007669"/>
    <property type="project" value="TreeGrafter"/>
</dbReference>
<dbReference type="GO" id="GO:0002184">
    <property type="term" value="P:cytoplasmic translational termination"/>
    <property type="evidence" value="ECO:0007669"/>
    <property type="project" value="TreeGrafter"/>
</dbReference>
<dbReference type="CDD" id="cd00520">
    <property type="entry name" value="RRF"/>
    <property type="match status" value="1"/>
</dbReference>
<dbReference type="FunFam" id="1.10.132.20:FF:000001">
    <property type="entry name" value="Ribosome-recycling factor"/>
    <property type="match status" value="1"/>
</dbReference>
<dbReference type="FunFam" id="3.30.1360.40:FF:000001">
    <property type="entry name" value="Ribosome-recycling factor"/>
    <property type="match status" value="1"/>
</dbReference>
<dbReference type="Gene3D" id="3.30.1360.40">
    <property type="match status" value="1"/>
</dbReference>
<dbReference type="Gene3D" id="1.10.132.20">
    <property type="entry name" value="Ribosome-recycling factor"/>
    <property type="match status" value="1"/>
</dbReference>
<dbReference type="HAMAP" id="MF_00040">
    <property type="entry name" value="RRF"/>
    <property type="match status" value="1"/>
</dbReference>
<dbReference type="InterPro" id="IPR002661">
    <property type="entry name" value="Ribosome_recyc_fac"/>
</dbReference>
<dbReference type="InterPro" id="IPR023584">
    <property type="entry name" value="Ribosome_recyc_fac_dom"/>
</dbReference>
<dbReference type="InterPro" id="IPR036191">
    <property type="entry name" value="RRF_sf"/>
</dbReference>
<dbReference type="NCBIfam" id="TIGR00496">
    <property type="entry name" value="frr"/>
    <property type="match status" value="1"/>
</dbReference>
<dbReference type="PANTHER" id="PTHR20982:SF3">
    <property type="entry name" value="MITOCHONDRIAL RIBOSOME RECYCLING FACTOR PSEUDO 1"/>
    <property type="match status" value="1"/>
</dbReference>
<dbReference type="PANTHER" id="PTHR20982">
    <property type="entry name" value="RIBOSOME RECYCLING FACTOR"/>
    <property type="match status" value="1"/>
</dbReference>
<dbReference type="Pfam" id="PF01765">
    <property type="entry name" value="RRF"/>
    <property type="match status" value="1"/>
</dbReference>
<dbReference type="SUPFAM" id="SSF55194">
    <property type="entry name" value="Ribosome recycling factor, RRF"/>
    <property type="match status" value="1"/>
</dbReference>
<accession>A1RLM4</accession>
<reference key="1">
    <citation type="submission" date="2006-12" db="EMBL/GenBank/DDBJ databases">
        <title>Complete sequence of Shewanella sp. W3-18-1.</title>
        <authorList>
            <consortium name="US DOE Joint Genome Institute"/>
            <person name="Copeland A."/>
            <person name="Lucas S."/>
            <person name="Lapidus A."/>
            <person name="Barry K."/>
            <person name="Detter J.C."/>
            <person name="Glavina del Rio T."/>
            <person name="Hammon N."/>
            <person name="Israni S."/>
            <person name="Dalin E."/>
            <person name="Tice H."/>
            <person name="Pitluck S."/>
            <person name="Chain P."/>
            <person name="Malfatti S."/>
            <person name="Shin M."/>
            <person name="Vergez L."/>
            <person name="Schmutz J."/>
            <person name="Larimer F."/>
            <person name="Land M."/>
            <person name="Hauser L."/>
            <person name="Kyrpides N."/>
            <person name="Lykidis A."/>
            <person name="Tiedje J."/>
            <person name="Richardson P."/>
        </authorList>
    </citation>
    <scope>NUCLEOTIDE SEQUENCE [LARGE SCALE GENOMIC DNA]</scope>
    <source>
        <strain>W3-18-1</strain>
    </source>
</reference>
<keyword id="KW-0963">Cytoplasm</keyword>
<keyword id="KW-0648">Protein biosynthesis</keyword>
<proteinExistence type="inferred from homology"/>
<comment type="function">
    <text evidence="1">Responsible for the release of ribosomes from messenger RNA at the termination of protein biosynthesis. May increase the efficiency of translation by recycling ribosomes from one round of translation to another.</text>
</comment>
<comment type="subcellular location">
    <subcellularLocation>
        <location evidence="1">Cytoplasm</location>
    </subcellularLocation>
</comment>
<comment type="similarity">
    <text evidence="1">Belongs to the RRF family.</text>
</comment>